<comment type="sequence caution" evidence="1">
    <conflict type="frameshift">
        <sequence resource="EMBL-CDS" id="AAA27352"/>
    </conflict>
</comment>
<sequence length="192" mass="22261">MAIRFQALEVVALSVPEAPRPIQEYLQDIDCLVGAIADPERTEKIAPDQYQLKMRPIGFLDLYKFQPIVTLKIWCDRHYQVHIKSLDYQLRGLEPFMKGFKLDVTGRLQPIADEQEQWLLEGEADLQVKLELPPPLWFTPKALVKKTGDRLLREILQRIKGQLLDQLVRDYQVWANGTRENSACGDRLETHP</sequence>
<reference key="1">
    <citation type="submission" date="2008-02" db="EMBL/GenBank/DDBJ databases">
        <title>Complete sequence of Synechococcus sp. PCC 7002.</title>
        <authorList>
            <person name="Li T."/>
            <person name="Zhao J."/>
            <person name="Zhao C."/>
            <person name="Liu Z."/>
            <person name="Zhao F."/>
            <person name="Marquardt J."/>
            <person name="Nomura C.T."/>
            <person name="Persson S."/>
            <person name="Detter J.C."/>
            <person name="Richardson P.M."/>
            <person name="Lanz C."/>
            <person name="Schuster S.C."/>
            <person name="Wang J."/>
            <person name="Li S."/>
            <person name="Huang X."/>
            <person name="Cai T."/>
            <person name="Yu Z."/>
            <person name="Luo J."/>
            <person name="Zhao J."/>
            <person name="Bryant D.A."/>
        </authorList>
    </citation>
    <scope>NUCLEOTIDE SEQUENCE [LARGE SCALE GENOMIC DNA]</scope>
    <source>
        <strain>ATCC 27264 / PCC 7002 / PR-6</strain>
    </source>
</reference>
<reference key="2">
    <citation type="journal article" date="1992" name="Gene">
        <title>The psaC genes of Synechococcus sp. PCC7002 and Cyanophora paradoxa: cloning and sequence analysis.</title>
        <authorList>
            <person name="Rhiel E."/>
            <person name="Stirewalt V.L."/>
            <person name="Gasparich G.E."/>
            <person name="Bryant D.A."/>
        </authorList>
    </citation>
    <scope>NUCLEOTIDE SEQUENCE [GENOMIC DNA] OF 1-110</scope>
</reference>
<protein>
    <recommendedName>
        <fullName>Uncharacterized protein SYNPCC7002_A1590</fullName>
    </recommendedName>
</protein>
<name>Y1590_PICP2</name>
<accession>P31525</accession>
<accession>B1XNQ6</accession>
<organism>
    <name type="scientific">Picosynechococcus sp. (strain ATCC 27264 / PCC 7002 / PR-6)</name>
    <name type="common">Agmenellum quadruplicatum</name>
    <dbReference type="NCBI Taxonomy" id="32049"/>
    <lineage>
        <taxon>Bacteria</taxon>
        <taxon>Bacillati</taxon>
        <taxon>Cyanobacteriota</taxon>
        <taxon>Cyanophyceae</taxon>
        <taxon>Oscillatoriophycideae</taxon>
        <taxon>Chroococcales</taxon>
        <taxon>Geminocystaceae</taxon>
        <taxon>Picosynechococcus</taxon>
    </lineage>
</organism>
<feature type="chain" id="PRO_0000066413" description="Uncharacterized protein SYNPCC7002_A1590">
    <location>
        <begin position="1"/>
        <end position="192"/>
    </location>
</feature>
<feature type="sequence conflict" description="In Ref. 2; AAA27352." evidence="1" ref="2">
    <original>D</original>
    <variation>G</variation>
    <location>
        <position position="76"/>
    </location>
</feature>
<keyword id="KW-1185">Reference proteome</keyword>
<gene>
    <name type="ordered locus">SYNPCC7002_A1590</name>
</gene>
<proteinExistence type="predicted"/>
<evidence type="ECO:0000305" key="1"/>
<dbReference type="EMBL" id="CP000951">
    <property type="protein sequence ID" value="ACA99581.1"/>
    <property type="molecule type" value="Genomic_DNA"/>
</dbReference>
<dbReference type="EMBL" id="M86238">
    <property type="protein sequence ID" value="AAA27352.1"/>
    <property type="status" value="ALT_FRAME"/>
    <property type="molecule type" value="Genomic_DNA"/>
</dbReference>
<dbReference type="RefSeq" id="WP_012307204.1">
    <property type="nucleotide sequence ID" value="NZ_JAHHPU010000002.1"/>
</dbReference>
<dbReference type="SMR" id="P31525"/>
<dbReference type="STRING" id="32049.SYNPCC7002_A1590"/>
<dbReference type="KEGG" id="syp:SYNPCC7002_A1590"/>
<dbReference type="eggNOG" id="ENOG50338M4">
    <property type="taxonomic scope" value="Bacteria"/>
</dbReference>
<dbReference type="HOGENOM" id="CLU_120364_0_0_3"/>
<dbReference type="Proteomes" id="UP000001688">
    <property type="component" value="Chromosome"/>
</dbReference>
<dbReference type="Gene3D" id="3.30.530.20">
    <property type="match status" value="1"/>
</dbReference>
<dbReference type="InterPro" id="IPR018971">
    <property type="entry name" value="DUF1997"/>
</dbReference>
<dbReference type="InterPro" id="IPR023393">
    <property type="entry name" value="START-like_dom_sf"/>
</dbReference>
<dbReference type="PANTHER" id="PTHR34133">
    <property type="entry name" value="OS07G0633000 PROTEIN"/>
    <property type="match status" value="1"/>
</dbReference>
<dbReference type="PANTHER" id="PTHR34133:SF8">
    <property type="entry name" value="OS07G0633000 PROTEIN"/>
    <property type="match status" value="1"/>
</dbReference>
<dbReference type="Pfam" id="PF09366">
    <property type="entry name" value="DUF1997"/>
    <property type="match status" value="1"/>
</dbReference>